<keyword id="KW-0328">Glycosyltransferase</keyword>
<keyword id="KW-0479">Metal-binding</keyword>
<keyword id="KW-0671">Queuosine biosynthesis</keyword>
<keyword id="KW-0808">Transferase</keyword>
<keyword id="KW-0819">tRNA processing</keyword>
<keyword id="KW-0862">Zinc</keyword>
<feature type="chain" id="PRO_1000097553" description="Queuine tRNA-ribosyltransferase">
    <location>
        <begin position="1"/>
        <end position="371"/>
    </location>
</feature>
<feature type="region of interest" description="RNA binding" evidence="1">
    <location>
        <begin position="246"/>
        <end position="252"/>
    </location>
</feature>
<feature type="region of interest" description="RNA binding; important for wobble base 34 recognition" evidence="1">
    <location>
        <begin position="270"/>
        <end position="274"/>
    </location>
</feature>
<feature type="active site" description="Proton acceptor" evidence="1">
    <location>
        <position position="90"/>
    </location>
</feature>
<feature type="active site" description="Nucleophile" evidence="1">
    <location>
        <position position="265"/>
    </location>
</feature>
<feature type="binding site" evidence="1">
    <location>
        <begin position="90"/>
        <end position="94"/>
    </location>
    <ligand>
        <name>substrate</name>
    </ligand>
</feature>
<feature type="binding site" evidence="1">
    <location>
        <position position="144"/>
    </location>
    <ligand>
        <name>substrate</name>
    </ligand>
</feature>
<feature type="binding site" evidence="1">
    <location>
        <position position="188"/>
    </location>
    <ligand>
        <name>substrate</name>
    </ligand>
</feature>
<feature type="binding site" evidence="1">
    <location>
        <position position="215"/>
    </location>
    <ligand>
        <name>substrate</name>
    </ligand>
</feature>
<feature type="binding site" evidence="1">
    <location>
        <position position="303"/>
    </location>
    <ligand>
        <name>Zn(2+)</name>
        <dbReference type="ChEBI" id="CHEBI:29105"/>
    </ligand>
</feature>
<feature type="binding site" evidence="1">
    <location>
        <position position="305"/>
    </location>
    <ligand>
        <name>Zn(2+)</name>
        <dbReference type="ChEBI" id="CHEBI:29105"/>
    </ligand>
</feature>
<feature type="binding site" evidence="1">
    <location>
        <position position="308"/>
    </location>
    <ligand>
        <name>Zn(2+)</name>
        <dbReference type="ChEBI" id="CHEBI:29105"/>
    </ligand>
</feature>
<feature type="binding site" evidence="1">
    <location>
        <position position="334"/>
    </location>
    <ligand>
        <name>Zn(2+)</name>
        <dbReference type="ChEBI" id="CHEBI:29105"/>
    </ligand>
</feature>
<organism>
    <name type="scientific">Neisseria gonorrhoeae (strain NCCP11945)</name>
    <dbReference type="NCBI Taxonomy" id="521006"/>
    <lineage>
        <taxon>Bacteria</taxon>
        <taxon>Pseudomonadati</taxon>
        <taxon>Pseudomonadota</taxon>
        <taxon>Betaproteobacteria</taxon>
        <taxon>Neisseriales</taxon>
        <taxon>Neisseriaceae</taxon>
        <taxon>Neisseria</taxon>
    </lineage>
</organism>
<comment type="function">
    <text evidence="1">Catalyzes the base-exchange of a guanine (G) residue with the queuine precursor 7-aminomethyl-7-deazaguanine (PreQ1) at position 34 (anticodon wobble position) in tRNAs with GU(N) anticodons (tRNA-Asp, -Asn, -His and -Tyr). Catalysis occurs through a double-displacement mechanism. The nucleophile active site attacks the C1' of nucleotide 34 to detach the guanine base from the RNA, forming a covalent enzyme-RNA intermediate. The proton acceptor active site deprotonates the incoming PreQ1, allowing a nucleophilic attack on the C1' of the ribose to form the product. After dissociation, two additional enzymatic reactions on the tRNA convert PreQ1 to queuine (Q), resulting in the hypermodified nucleoside queuosine (7-(((4,5-cis-dihydroxy-2-cyclopenten-1-yl)amino)methyl)-7-deazaguanosine).</text>
</comment>
<comment type="catalytic activity">
    <reaction evidence="1">
        <text>7-aminomethyl-7-carbaguanine + guanosine(34) in tRNA = 7-aminomethyl-7-carbaguanosine(34) in tRNA + guanine</text>
        <dbReference type="Rhea" id="RHEA:24104"/>
        <dbReference type="Rhea" id="RHEA-COMP:10341"/>
        <dbReference type="Rhea" id="RHEA-COMP:10342"/>
        <dbReference type="ChEBI" id="CHEBI:16235"/>
        <dbReference type="ChEBI" id="CHEBI:58703"/>
        <dbReference type="ChEBI" id="CHEBI:74269"/>
        <dbReference type="ChEBI" id="CHEBI:82833"/>
        <dbReference type="EC" id="2.4.2.29"/>
    </reaction>
</comment>
<comment type="cofactor">
    <cofactor evidence="1">
        <name>Zn(2+)</name>
        <dbReference type="ChEBI" id="CHEBI:29105"/>
    </cofactor>
    <text evidence="1">Binds 1 zinc ion per subunit.</text>
</comment>
<comment type="pathway">
    <text evidence="1">tRNA modification; tRNA-queuosine biosynthesis.</text>
</comment>
<comment type="subunit">
    <text evidence="1">Homodimer. Within each dimer, one monomer is responsible for RNA recognition and catalysis, while the other monomer binds to the replacement base PreQ1.</text>
</comment>
<comment type="similarity">
    <text evidence="1">Belongs to the queuine tRNA-ribosyltransferase family.</text>
</comment>
<protein>
    <recommendedName>
        <fullName evidence="1">Queuine tRNA-ribosyltransferase</fullName>
        <ecNumber evidence="1">2.4.2.29</ecNumber>
    </recommendedName>
    <alternativeName>
        <fullName evidence="1">Guanine insertion enzyme</fullName>
    </alternativeName>
    <alternativeName>
        <fullName evidence="1">tRNA-guanine transglycosylase</fullName>
    </alternativeName>
</protein>
<gene>
    <name evidence="1" type="primary">tgt</name>
    <name type="ordered locus">NGK_0442</name>
</gene>
<evidence type="ECO:0000255" key="1">
    <source>
        <dbReference type="HAMAP-Rule" id="MF_00168"/>
    </source>
</evidence>
<accession>B4RJY2</accession>
<dbReference type="EC" id="2.4.2.29" evidence="1"/>
<dbReference type="EMBL" id="CP001050">
    <property type="protein sequence ID" value="ACF29133.1"/>
    <property type="molecule type" value="Genomic_DNA"/>
</dbReference>
<dbReference type="RefSeq" id="WP_003687675.1">
    <property type="nucleotide sequence ID" value="NC_011035.1"/>
</dbReference>
<dbReference type="SMR" id="B4RJY2"/>
<dbReference type="KEGG" id="ngk:NGK_0442"/>
<dbReference type="HOGENOM" id="CLU_022060_0_1_4"/>
<dbReference type="UniPathway" id="UPA00392"/>
<dbReference type="Proteomes" id="UP000002564">
    <property type="component" value="Chromosome"/>
</dbReference>
<dbReference type="GO" id="GO:0005829">
    <property type="term" value="C:cytosol"/>
    <property type="evidence" value="ECO:0007669"/>
    <property type="project" value="TreeGrafter"/>
</dbReference>
<dbReference type="GO" id="GO:0046872">
    <property type="term" value="F:metal ion binding"/>
    <property type="evidence" value="ECO:0007669"/>
    <property type="project" value="UniProtKB-KW"/>
</dbReference>
<dbReference type="GO" id="GO:0008479">
    <property type="term" value="F:tRNA-guanosine(34) queuine transglycosylase activity"/>
    <property type="evidence" value="ECO:0007669"/>
    <property type="project" value="UniProtKB-UniRule"/>
</dbReference>
<dbReference type="GO" id="GO:0008616">
    <property type="term" value="P:queuosine biosynthetic process"/>
    <property type="evidence" value="ECO:0007669"/>
    <property type="project" value="UniProtKB-UniRule"/>
</dbReference>
<dbReference type="GO" id="GO:0002099">
    <property type="term" value="P:tRNA wobble guanine modification"/>
    <property type="evidence" value="ECO:0007669"/>
    <property type="project" value="TreeGrafter"/>
</dbReference>
<dbReference type="GO" id="GO:0101030">
    <property type="term" value="P:tRNA-guanine transglycosylation"/>
    <property type="evidence" value="ECO:0007669"/>
    <property type="project" value="InterPro"/>
</dbReference>
<dbReference type="FunFam" id="3.20.20.105:FF:000001">
    <property type="entry name" value="Queuine tRNA-ribosyltransferase"/>
    <property type="match status" value="1"/>
</dbReference>
<dbReference type="Gene3D" id="3.20.20.105">
    <property type="entry name" value="Queuine tRNA-ribosyltransferase-like"/>
    <property type="match status" value="1"/>
</dbReference>
<dbReference type="HAMAP" id="MF_00168">
    <property type="entry name" value="Q_tRNA_Tgt"/>
    <property type="match status" value="1"/>
</dbReference>
<dbReference type="InterPro" id="IPR050076">
    <property type="entry name" value="ArchSynthase1/Queuine_TRR"/>
</dbReference>
<dbReference type="InterPro" id="IPR004803">
    <property type="entry name" value="TGT"/>
</dbReference>
<dbReference type="InterPro" id="IPR036511">
    <property type="entry name" value="TGT-like_sf"/>
</dbReference>
<dbReference type="InterPro" id="IPR002616">
    <property type="entry name" value="tRNA_ribo_trans-like"/>
</dbReference>
<dbReference type="NCBIfam" id="TIGR00430">
    <property type="entry name" value="Q_tRNA_tgt"/>
    <property type="match status" value="1"/>
</dbReference>
<dbReference type="NCBIfam" id="TIGR00449">
    <property type="entry name" value="tgt_general"/>
    <property type="match status" value="1"/>
</dbReference>
<dbReference type="PANTHER" id="PTHR46499">
    <property type="entry name" value="QUEUINE TRNA-RIBOSYLTRANSFERASE"/>
    <property type="match status" value="1"/>
</dbReference>
<dbReference type="PANTHER" id="PTHR46499:SF1">
    <property type="entry name" value="QUEUINE TRNA-RIBOSYLTRANSFERASE"/>
    <property type="match status" value="1"/>
</dbReference>
<dbReference type="Pfam" id="PF01702">
    <property type="entry name" value="TGT"/>
    <property type="match status" value="1"/>
</dbReference>
<dbReference type="SUPFAM" id="SSF51713">
    <property type="entry name" value="tRNA-guanine transglycosylase"/>
    <property type="match status" value="1"/>
</dbReference>
<sequence>MLKFTLHKKDGLARRGTLELNHGKIETPVFMPVGTYGSVKAMNPQNLHDIKAQIILGNTYHLWLRPGLEVVEQFGGLHGFIGWDKPILTDSGGFQVFSLSDMRKLTEEGCTFKSPINGDKLFLSPEISMKIQTVLNSDIAMQLDECTPGETTREQARKSLQMSLRWAERSKKAFEDLKNPNALFGIVQGAMYEDLREESLRGLEEFDFPGLAVGGLSVGEPKPEMYRMLHAVGPILPEHKPHYLMGVGTPEDLVYGVAHGIDMFDCVMPTRNARNGWLFTRFGDLKIKNAKHKLDKRPIDESCTCYACQNFSRAYLHHLHRAGEILGAQLNTIHNLHFYQVIMAEMREAVEQGKFADWQAQFHENRARGVD</sequence>
<proteinExistence type="inferred from homology"/>
<name>TGT_NEIG2</name>
<reference key="1">
    <citation type="journal article" date="2008" name="J. Bacteriol.">
        <title>Complete genome sequence of Neisseria gonorrhoeae NCCP11945.</title>
        <authorList>
            <person name="Chung G.T."/>
            <person name="Yoo J.S."/>
            <person name="Oh H.B."/>
            <person name="Lee Y.S."/>
            <person name="Cha S.H."/>
            <person name="Kim S.J."/>
            <person name="Yoo C.K."/>
        </authorList>
    </citation>
    <scope>NUCLEOTIDE SEQUENCE [LARGE SCALE GENOMIC DNA]</scope>
    <source>
        <strain>NCCP11945</strain>
    </source>
</reference>